<evidence type="ECO:0000250" key="1"/>
<evidence type="ECO:0000255" key="2">
    <source>
        <dbReference type="PROSITE-ProRule" id="PRU10009"/>
    </source>
</evidence>
<evidence type="ECO:0000305" key="3"/>
<dbReference type="EC" id="1.2.1.12"/>
<dbReference type="EMBL" id="AF000310">
    <property type="protein sequence ID" value="AAB61404.1"/>
    <property type="molecule type" value="Genomic_DNA"/>
</dbReference>
<dbReference type="SMR" id="P54117"/>
<dbReference type="UniPathway" id="UPA00109">
    <property type="reaction ID" value="UER00184"/>
</dbReference>
<dbReference type="GO" id="GO:0005829">
    <property type="term" value="C:cytosol"/>
    <property type="evidence" value="ECO:0007669"/>
    <property type="project" value="TreeGrafter"/>
</dbReference>
<dbReference type="GO" id="GO:0004365">
    <property type="term" value="F:glyceraldehyde-3-phosphate dehydrogenase (NAD+) (phosphorylating) activity"/>
    <property type="evidence" value="ECO:0007669"/>
    <property type="project" value="UniProtKB-EC"/>
</dbReference>
<dbReference type="GO" id="GO:0051287">
    <property type="term" value="F:NAD binding"/>
    <property type="evidence" value="ECO:0007669"/>
    <property type="project" value="InterPro"/>
</dbReference>
<dbReference type="GO" id="GO:0050661">
    <property type="term" value="F:NADP binding"/>
    <property type="evidence" value="ECO:0007669"/>
    <property type="project" value="InterPro"/>
</dbReference>
<dbReference type="GO" id="GO:0006006">
    <property type="term" value="P:glucose metabolic process"/>
    <property type="evidence" value="ECO:0007669"/>
    <property type="project" value="InterPro"/>
</dbReference>
<dbReference type="GO" id="GO:0006096">
    <property type="term" value="P:glycolytic process"/>
    <property type="evidence" value="ECO:0007669"/>
    <property type="project" value="UniProtKB-UniPathway"/>
</dbReference>
<dbReference type="CDD" id="cd18126">
    <property type="entry name" value="GAPDH_I_C"/>
    <property type="match status" value="1"/>
</dbReference>
<dbReference type="CDD" id="cd05214">
    <property type="entry name" value="GAPDH_I_N"/>
    <property type="match status" value="1"/>
</dbReference>
<dbReference type="FunFam" id="3.30.360.10:FF:000001">
    <property type="entry name" value="Glyceraldehyde-3-phosphate dehydrogenase"/>
    <property type="match status" value="1"/>
</dbReference>
<dbReference type="FunFam" id="3.40.50.720:FF:000020">
    <property type="entry name" value="Glyceraldehyde-3-phosphate dehydrogenase"/>
    <property type="match status" value="1"/>
</dbReference>
<dbReference type="Gene3D" id="3.30.360.10">
    <property type="entry name" value="Dihydrodipicolinate Reductase, domain 2"/>
    <property type="match status" value="1"/>
</dbReference>
<dbReference type="Gene3D" id="3.40.50.720">
    <property type="entry name" value="NAD(P)-binding Rossmann-like Domain"/>
    <property type="match status" value="1"/>
</dbReference>
<dbReference type="InterPro" id="IPR020831">
    <property type="entry name" value="GlycerAld/Erythrose_P_DH"/>
</dbReference>
<dbReference type="InterPro" id="IPR020830">
    <property type="entry name" value="GlycerAld_3-P_DH_AS"/>
</dbReference>
<dbReference type="InterPro" id="IPR020829">
    <property type="entry name" value="GlycerAld_3-P_DH_cat"/>
</dbReference>
<dbReference type="InterPro" id="IPR020828">
    <property type="entry name" value="GlycerAld_3-P_DH_NAD(P)-bd"/>
</dbReference>
<dbReference type="InterPro" id="IPR006424">
    <property type="entry name" value="Glyceraldehyde-3-P_DH_1"/>
</dbReference>
<dbReference type="InterPro" id="IPR036291">
    <property type="entry name" value="NAD(P)-bd_dom_sf"/>
</dbReference>
<dbReference type="NCBIfam" id="TIGR01534">
    <property type="entry name" value="GAPDH-I"/>
    <property type="match status" value="1"/>
</dbReference>
<dbReference type="PANTHER" id="PTHR10836">
    <property type="entry name" value="GLYCERALDEHYDE 3-PHOSPHATE DEHYDROGENASE"/>
    <property type="match status" value="1"/>
</dbReference>
<dbReference type="PANTHER" id="PTHR10836:SF76">
    <property type="entry name" value="GLYCERALDEHYDE-3-PHOSPHATE DEHYDROGENASE-RELATED"/>
    <property type="match status" value="1"/>
</dbReference>
<dbReference type="Pfam" id="PF02800">
    <property type="entry name" value="Gp_dh_C"/>
    <property type="match status" value="1"/>
</dbReference>
<dbReference type="Pfam" id="PF00044">
    <property type="entry name" value="Gp_dh_N"/>
    <property type="match status" value="1"/>
</dbReference>
<dbReference type="PIRSF" id="PIRSF000149">
    <property type="entry name" value="GAP_DH"/>
    <property type="match status" value="1"/>
</dbReference>
<dbReference type="PRINTS" id="PR00078">
    <property type="entry name" value="G3PDHDRGNASE"/>
</dbReference>
<dbReference type="SMART" id="SM00846">
    <property type="entry name" value="Gp_dh_N"/>
    <property type="match status" value="1"/>
</dbReference>
<dbReference type="SUPFAM" id="SSF55347">
    <property type="entry name" value="Glyceraldehyde-3-phosphate dehydrogenase-like, C-terminal domain"/>
    <property type="match status" value="1"/>
</dbReference>
<dbReference type="SUPFAM" id="SSF51735">
    <property type="entry name" value="NAD(P)-binding Rossmann-fold domains"/>
    <property type="match status" value="1"/>
</dbReference>
<dbReference type="PROSITE" id="PS00071">
    <property type="entry name" value="GAPDH"/>
    <property type="match status" value="1"/>
</dbReference>
<gene>
    <name type="primary">GPDA</name>
    <name type="synonym">GPD</name>
</gene>
<comment type="catalytic activity">
    <reaction evidence="2">
        <text>D-glyceraldehyde 3-phosphate + phosphate + NAD(+) = (2R)-3-phospho-glyceroyl phosphate + NADH + H(+)</text>
        <dbReference type="Rhea" id="RHEA:10300"/>
        <dbReference type="ChEBI" id="CHEBI:15378"/>
        <dbReference type="ChEBI" id="CHEBI:43474"/>
        <dbReference type="ChEBI" id="CHEBI:57540"/>
        <dbReference type="ChEBI" id="CHEBI:57604"/>
        <dbReference type="ChEBI" id="CHEBI:57945"/>
        <dbReference type="ChEBI" id="CHEBI:59776"/>
        <dbReference type="EC" id="1.2.1.12"/>
    </reaction>
</comment>
<comment type="pathway">
    <text>Carbohydrate degradation; glycolysis; pyruvate from D-glyceraldehyde 3-phosphate: step 1/5.</text>
</comment>
<comment type="subunit">
    <text evidence="1">Homotetramer.</text>
</comment>
<comment type="subcellular location">
    <subcellularLocation>
        <location evidence="1">Cytoplasm</location>
    </subcellularLocation>
</comment>
<comment type="similarity">
    <text evidence="3">Belongs to the glyceraldehyde-3-phosphate dehydrogenase family.</text>
</comment>
<organism>
    <name type="scientific">Colletotrichum lindemuthianum</name>
    <name type="common">Bean anthracnose fungus</name>
    <name type="synonym">Glomerella lindemuthiana</name>
    <dbReference type="NCBI Taxonomy" id="290576"/>
    <lineage>
        <taxon>Eukaryota</taxon>
        <taxon>Fungi</taxon>
        <taxon>Dikarya</taxon>
        <taxon>Ascomycota</taxon>
        <taxon>Pezizomycotina</taxon>
        <taxon>Sordariomycetes</taxon>
        <taxon>Hypocreomycetidae</taxon>
        <taxon>Glomerellales</taxon>
        <taxon>Glomerellaceae</taxon>
        <taxon>Colletotrichum</taxon>
        <taxon>Colletotrichum orbiculare species complex</taxon>
    </lineage>
</organism>
<reference key="1">
    <citation type="submission" date="1995-12" db="EMBL/GenBank/DDBJ databases">
        <authorList>
            <person name="Dufresne M."/>
            <person name="Langin T."/>
            <person name="Parisot D."/>
            <person name="Julien J."/>
            <person name="Dron M."/>
        </authorList>
    </citation>
    <scope>NUCLEOTIDE SEQUENCE [GENOMIC DNA]</scope>
    <source>
        <strain>UPS9</strain>
    </source>
</reference>
<accession>P54117</accession>
<sequence length="337" mass="36313">MAPIKVGINGFGRIGRIVFRNAVEHPDVEIVAVNDPFIETKYAAYMLKYDSTHGIFNGEIAQDGNDLVINGKKVKFYTERDPAVIPWKETGADYVVESTGVFTTIDKAKAHLQGGAKKVIISAPSADAPMYVMGVNEKSYDGSAVISQASCTTNCLAPLAKVINDKYTIIEGLMTTVHSYTATQKTVDGPSAKDWRGGRTAAQNIIPSSTGAPKAVGKVIPELNGKLTGMSMRVPTANVSVVDLTVRIEKGATYDEIKQAIKEAAEGPLKGVLAYTEDDFVSTDMIGNPNSSIFDAKAGISLNNNFVKLVSWYDNEWGYSRRVLDLLAHVAKVDASK</sequence>
<proteinExistence type="inferred from homology"/>
<name>G3P_COLLN</name>
<keyword id="KW-0963">Cytoplasm</keyword>
<keyword id="KW-0324">Glycolysis</keyword>
<keyword id="KW-0520">NAD</keyword>
<keyword id="KW-0560">Oxidoreductase</keyword>
<protein>
    <recommendedName>
        <fullName>Glyceraldehyde-3-phosphate dehydrogenase</fullName>
        <shortName>GAPDH</shortName>
        <ecNumber>1.2.1.12</ecNumber>
    </recommendedName>
</protein>
<feature type="chain" id="PRO_0000145548" description="Glyceraldehyde-3-phosphate dehydrogenase">
    <location>
        <begin position="1"/>
        <end position="337"/>
    </location>
</feature>
<feature type="active site" description="Nucleophile" evidence="2">
    <location>
        <position position="151"/>
    </location>
</feature>
<feature type="binding site" evidence="1">
    <location>
        <begin position="13"/>
        <end position="14"/>
    </location>
    <ligand>
        <name>NAD(+)</name>
        <dbReference type="ChEBI" id="CHEBI:57540"/>
    </ligand>
</feature>
<feature type="binding site" evidence="1">
    <location>
        <position position="35"/>
    </location>
    <ligand>
        <name>NAD(+)</name>
        <dbReference type="ChEBI" id="CHEBI:57540"/>
    </ligand>
</feature>
<feature type="binding site" evidence="1">
    <location>
        <position position="80"/>
    </location>
    <ligand>
        <name>NAD(+)</name>
        <dbReference type="ChEBI" id="CHEBI:57540"/>
    </ligand>
</feature>
<feature type="binding site" evidence="1">
    <location>
        <begin position="150"/>
        <end position="152"/>
    </location>
    <ligand>
        <name>D-glyceraldehyde 3-phosphate</name>
        <dbReference type="ChEBI" id="CHEBI:59776"/>
    </ligand>
</feature>
<feature type="binding site" evidence="1">
    <location>
        <position position="181"/>
    </location>
    <ligand>
        <name>D-glyceraldehyde 3-phosphate</name>
        <dbReference type="ChEBI" id="CHEBI:59776"/>
    </ligand>
</feature>
<feature type="binding site" evidence="1">
    <location>
        <begin position="210"/>
        <end position="211"/>
    </location>
    <ligand>
        <name>D-glyceraldehyde 3-phosphate</name>
        <dbReference type="ChEBI" id="CHEBI:59776"/>
    </ligand>
</feature>
<feature type="binding site" evidence="1">
    <location>
        <position position="233"/>
    </location>
    <ligand>
        <name>D-glyceraldehyde 3-phosphate</name>
        <dbReference type="ChEBI" id="CHEBI:59776"/>
    </ligand>
</feature>
<feature type="binding site" evidence="1">
    <location>
        <position position="315"/>
    </location>
    <ligand>
        <name>NAD(+)</name>
        <dbReference type="ChEBI" id="CHEBI:57540"/>
    </ligand>
</feature>
<feature type="site" description="Activates thiol group during catalysis" evidence="1">
    <location>
        <position position="178"/>
    </location>
</feature>